<accession>Q4K9J4</accession>
<organism>
    <name type="scientific">Pseudomonas fluorescens (strain ATCC BAA-477 / NRRL B-23932 / Pf-5)</name>
    <dbReference type="NCBI Taxonomy" id="220664"/>
    <lineage>
        <taxon>Bacteria</taxon>
        <taxon>Pseudomonadati</taxon>
        <taxon>Pseudomonadota</taxon>
        <taxon>Gammaproteobacteria</taxon>
        <taxon>Pseudomonadales</taxon>
        <taxon>Pseudomonadaceae</taxon>
        <taxon>Pseudomonas</taxon>
    </lineage>
</organism>
<evidence type="ECO:0000255" key="1">
    <source>
        <dbReference type="HAMAP-Rule" id="MF_01576"/>
    </source>
</evidence>
<keyword id="KW-0028">Amino-acid biosynthesis</keyword>
<keyword id="KW-0368">Histidine biosynthesis</keyword>
<keyword id="KW-0378">Hydrolase</keyword>
<keyword id="KW-0486">Methionine biosynthesis</keyword>
<keyword id="KW-0511">Multifunctional enzyme</keyword>
<keyword id="KW-0521">NADP</keyword>
<keyword id="KW-0554">One-carbon metabolism</keyword>
<keyword id="KW-0560">Oxidoreductase</keyword>
<keyword id="KW-0658">Purine biosynthesis</keyword>
<reference key="1">
    <citation type="journal article" date="2005" name="Nat. Biotechnol.">
        <title>Complete genome sequence of the plant commensal Pseudomonas fluorescens Pf-5.</title>
        <authorList>
            <person name="Paulsen I.T."/>
            <person name="Press C.M."/>
            <person name="Ravel J."/>
            <person name="Kobayashi D.Y."/>
            <person name="Myers G.S.A."/>
            <person name="Mavrodi D.V."/>
            <person name="DeBoy R.T."/>
            <person name="Seshadri R."/>
            <person name="Ren Q."/>
            <person name="Madupu R."/>
            <person name="Dodson R.J."/>
            <person name="Durkin A.S."/>
            <person name="Brinkac L.M."/>
            <person name="Daugherty S.C."/>
            <person name="Sullivan S.A."/>
            <person name="Rosovitz M.J."/>
            <person name="Gwinn M.L."/>
            <person name="Zhou L."/>
            <person name="Schneider D.J."/>
            <person name="Cartinhour S.W."/>
            <person name="Nelson W.C."/>
            <person name="Weidman J."/>
            <person name="Watkins K."/>
            <person name="Tran K."/>
            <person name="Khouri H."/>
            <person name="Pierson E.A."/>
            <person name="Pierson L.S. III"/>
            <person name="Thomashow L.S."/>
            <person name="Loper J.E."/>
        </authorList>
    </citation>
    <scope>NUCLEOTIDE SEQUENCE [LARGE SCALE GENOMIC DNA]</scope>
    <source>
        <strain>ATCC BAA-477 / NRRL B-23932 / Pf-5</strain>
    </source>
</reference>
<dbReference type="EC" id="1.5.1.5" evidence="1"/>
<dbReference type="EC" id="3.5.4.9" evidence="1"/>
<dbReference type="EMBL" id="CP000076">
    <property type="protein sequence ID" value="AAY93253.1"/>
    <property type="molecule type" value="Genomic_DNA"/>
</dbReference>
<dbReference type="RefSeq" id="WP_011062276.1">
    <property type="nucleotide sequence ID" value="NC_004129.6"/>
</dbReference>
<dbReference type="SMR" id="Q4K9J4"/>
<dbReference type="STRING" id="220664.PFL_3992"/>
<dbReference type="GeneID" id="57477060"/>
<dbReference type="KEGG" id="pfl:PFL_3992"/>
<dbReference type="PATRIC" id="fig|220664.5.peg.4087"/>
<dbReference type="eggNOG" id="COG0190">
    <property type="taxonomic scope" value="Bacteria"/>
</dbReference>
<dbReference type="HOGENOM" id="CLU_034045_2_1_6"/>
<dbReference type="UniPathway" id="UPA00193"/>
<dbReference type="Proteomes" id="UP000008540">
    <property type="component" value="Chromosome"/>
</dbReference>
<dbReference type="GO" id="GO:0005829">
    <property type="term" value="C:cytosol"/>
    <property type="evidence" value="ECO:0007669"/>
    <property type="project" value="TreeGrafter"/>
</dbReference>
<dbReference type="GO" id="GO:0004477">
    <property type="term" value="F:methenyltetrahydrofolate cyclohydrolase activity"/>
    <property type="evidence" value="ECO:0007669"/>
    <property type="project" value="UniProtKB-UniRule"/>
</dbReference>
<dbReference type="GO" id="GO:0004488">
    <property type="term" value="F:methylenetetrahydrofolate dehydrogenase (NADP+) activity"/>
    <property type="evidence" value="ECO:0007669"/>
    <property type="project" value="UniProtKB-UniRule"/>
</dbReference>
<dbReference type="GO" id="GO:0000105">
    <property type="term" value="P:L-histidine biosynthetic process"/>
    <property type="evidence" value="ECO:0007669"/>
    <property type="project" value="UniProtKB-KW"/>
</dbReference>
<dbReference type="GO" id="GO:0009086">
    <property type="term" value="P:methionine biosynthetic process"/>
    <property type="evidence" value="ECO:0007669"/>
    <property type="project" value="UniProtKB-KW"/>
</dbReference>
<dbReference type="GO" id="GO:0006164">
    <property type="term" value="P:purine nucleotide biosynthetic process"/>
    <property type="evidence" value="ECO:0007669"/>
    <property type="project" value="UniProtKB-KW"/>
</dbReference>
<dbReference type="GO" id="GO:0035999">
    <property type="term" value="P:tetrahydrofolate interconversion"/>
    <property type="evidence" value="ECO:0007669"/>
    <property type="project" value="UniProtKB-UniRule"/>
</dbReference>
<dbReference type="CDD" id="cd01080">
    <property type="entry name" value="NAD_bind_m-THF_DH_Cyclohyd"/>
    <property type="match status" value="1"/>
</dbReference>
<dbReference type="FunFam" id="3.40.50.10860:FF:000001">
    <property type="entry name" value="Bifunctional protein FolD"/>
    <property type="match status" value="1"/>
</dbReference>
<dbReference type="FunFam" id="3.40.50.720:FF:000006">
    <property type="entry name" value="Bifunctional protein FolD"/>
    <property type="match status" value="1"/>
</dbReference>
<dbReference type="Gene3D" id="3.40.50.10860">
    <property type="entry name" value="Leucine Dehydrogenase, chain A, domain 1"/>
    <property type="match status" value="1"/>
</dbReference>
<dbReference type="Gene3D" id="3.40.50.720">
    <property type="entry name" value="NAD(P)-binding Rossmann-like Domain"/>
    <property type="match status" value="1"/>
</dbReference>
<dbReference type="HAMAP" id="MF_01576">
    <property type="entry name" value="THF_DHG_CYH"/>
    <property type="match status" value="1"/>
</dbReference>
<dbReference type="InterPro" id="IPR046346">
    <property type="entry name" value="Aminoacid_DH-like_N_sf"/>
</dbReference>
<dbReference type="InterPro" id="IPR036291">
    <property type="entry name" value="NAD(P)-bd_dom_sf"/>
</dbReference>
<dbReference type="InterPro" id="IPR000672">
    <property type="entry name" value="THF_DH/CycHdrlase"/>
</dbReference>
<dbReference type="InterPro" id="IPR020630">
    <property type="entry name" value="THF_DH/CycHdrlase_cat_dom"/>
</dbReference>
<dbReference type="InterPro" id="IPR020631">
    <property type="entry name" value="THF_DH/CycHdrlase_NAD-bd_dom"/>
</dbReference>
<dbReference type="NCBIfam" id="NF008058">
    <property type="entry name" value="PRK10792.1"/>
    <property type="match status" value="1"/>
</dbReference>
<dbReference type="NCBIfam" id="NF010783">
    <property type="entry name" value="PRK14186.1"/>
    <property type="match status" value="1"/>
</dbReference>
<dbReference type="PANTHER" id="PTHR48099:SF5">
    <property type="entry name" value="C-1-TETRAHYDROFOLATE SYNTHASE, CYTOPLASMIC"/>
    <property type="match status" value="1"/>
</dbReference>
<dbReference type="PANTHER" id="PTHR48099">
    <property type="entry name" value="C-1-TETRAHYDROFOLATE SYNTHASE, CYTOPLASMIC-RELATED"/>
    <property type="match status" value="1"/>
</dbReference>
<dbReference type="Pfam" id="PF00763">
    <property type="entry name" value="THF_DHG_CYH"/>
    <property type="match status" value="1"/>
</dbReference>
<dbReference type="Pfam" id="PF02882">
    <property type="entry name" value="THF_DHG_CYH_C"/>
    <property type="match status" value="1"/>
</dbReference>
<dbReference type="PRINTS" id="PR00085">
    <property type="entry name" value="THFDHDRGNASE"/>
</dbReference>
<dbReference type="SUPFAM" id="SSF53223">
    <property type="entry name" value="Aminoacid dehydrogenase-like, N-terminal domain"/>
    <property type="match status" value="1"/>
</dbReference>
<dbReference type="SUPFAM" id="SSF51735">
    <property type="entry name" value="NAD(P)-binding Rossmann-fold domains"/>
    <property type="match status" value="1"/>
</dbReference>
<proteinExistence type="inferred from homology"/>
<gene>
    <name evidence="1" type="primary">folD</name>
    <name type="ordered locus">PFL_3992</name>
</gene>
<protein>
    <recommendedName>
        <fullName evidence="1">Bifunctional protein FolD</fullName>
    </recommendedName>
    <domain>
        <recommendedName>
            <fullName evidence="1">Methylenetetrahydrofolate dehydrogenase</fullName>
            <ecNumber evidence="1">1.5.1.5</ecNumber>
        </recommendedName>
    </domain>
    <domain>
        <recommendedName>
            <fullName evidence="1">Methenyltetrahydrofolate cyclohydrolase</fullName>
            <ecNumber evidence="1">3.5.4.9</ecNumber>
        </recommendedName>
    </domain>
</protein>
<comment type="function">
    <text evidence="1">Catalyzes the oxidation of 5,10-methylenetetrahydrofolate to 5,10-methenyltetrahydrofolate and then the hydrolysis of 5,10-methenyltetrahydrofolate to 10-formyltetrahydrofolate.</text>
</comment>
<comment type="catalytic activity">
    <reaction evidence="1">
        <text>(6R)-5,10-methylene-5,6,7,8-tetrahydrofolate + NADP(+) = (6R)-5,10-methenyltetrahydrofolate + NADPH</text>
        <dbReference type="Rhea" id="RHEA:22812"/>
        <dbReference type="ChEBI" id="CHEBI:15636"/>
        <dbReference type="ChEBI" id="CHEBI:57455"/>
        <dbReference type="ChEBI" id="CHEBI:57783"/>
        <dbReference type="ChEBI" id="CHEBI:58349"/>
        <dbReference type="EC" id="1.5.1.5"/>
    </reaction>
</comment>
<comment type="catalytic activity">
    <reaction evidence="1">
        <text>(6R)-5,10-methenyltetrahydrofolate + H2O = (6R)-10-formyltetrahydrofolate + H(+)</text>
        <dbReference type="Rhea" id="RHEA:23700"/>
        <dbReference type="ChEBI" id="CHEBI:15377"/>
        <dbReference type="ChEBI" id="CHEBI:15378"/>
        <dbReference type="ChEBI" id="CHEBI:57455"/>
        <dbReference type="ChEBI" id="CHEBI:195366"/>
        <dbReference type="EC" id="3.5.4.9"/>
    </reaction>
</comment>
<comment type="pathway">
    <text evidence="1">One-carbon metabolism; tetrahydrofolate interconversion.</text>
</comment>
<comment type="subunit">
    <text evidence="1">Homodimer.</text>
</comment>
<comment type="similarity">
    <text evidence="1">Belongs to the tetrahydrofolate dehydrogenase/cyclohydrolase family.</text>
</comment>
<sequence>MTAQLIDGKAIAASLRQQIAKRVAERRQQGLRTPGLAVILVGSDPASQVYVSHKRKDCEEVGFLSQAYDLPANTTQEDLAGLIDRLNDDPNIDGVLLQLPLPEHLDASLLLERIRPDKDVDGFHPYNVGRLAQRIPLLRPCTPKGIMTLLESTGADLYGMDAVVVGASNIVGRPMAMELLLAGCTVTVTHRFTKDLAGHVGRADLVVVAAGKPGLVKGEWIKEGAIVIDVGINRQDDGKLVGDVVYETALPRAGWITPVPGGVGPMTRACLLENTLYAAESLHS</sequence>
<name>FOLD_PSEF5</name>
<feature type="chain" id="PRO_0000268444" description="Bifunctional protein FolD">
    <location>
        <begin position="1"/>
        <end position="284"/>
    </location>
</feature>
<feature type="binding site" evidence="1">
    <location>
        <begin position="166"/>
        <end position="168"/>
    </location>
    <ligand>
        <name>NADP(+)</name>
        <dbReference type="ChEBI" id="CHEBI:58349"/>
    </ligand>
</feature>
<feature type="binding site" evidence="1">
    <location>
        <position position="232"/>
    </location>
    <ligand>
        <name>NADP(+)</name>
        <dbReference type="ChEBI" id="CHEBI:58349"/>
    </ligand>
</feature>